<protein>
    <recommendedName>
        <fullName evidence="1">Uridine kinase</fullName>
        <ecNumber evidence="1">2.7.1.48</ecNumber>
    </recommendedName>
    <alternativeName>
        <fullName evidence="1">Cytidine monophosphokinase</fullName>
    </alternativeName>
    <alternativeName>
        <fullName evidence="1">Uridine monophosphokinase</fullName>
    </alternativeName>
</protein>
<evidence type="ECO:0000255" key="1">
    <source>
        <dbReference type="HAMAP-Rule" id="MF_00551"/>
    </source>
</evidence>
<feature type="chain" id="PRO_1000200519" description="Uridine kinase">
    <location>
        <begin position="1"/>
        <end position="212"/>
    </location>
</feature>
<feature type="binding site" evidence="1">
    <location>
        <begin position="13"/>
        <end position="20"/>
    </location>
    <ligand>
        <name>ATP</name>
        <dbReference type="ChEBI" id="CHEBI:30616"/>
    </ligand>
</feature>
<proteinExistence type="inferred from homology"/>
<comment type="catalytic activity">
    <reaction evidence="1">
        <text>uridine + ATP = UMP + ADP + H(+)</text>
        <dbReference type="Rhea" id="RHEA:16825"/>
        <dbReference type="ChEBI" id="CHEBI:15378"/>
        <dbReference type="ChEBI" id="CHEBI:16704"/>
        <dbReference type="ChEBI" id="CHEBI:30616"/>
        <dbReference type="ChEBI" id="CHEBI:57865"/>
        <dbReference type="ChEBI" id="CHEBI:456216"/>
        <dbReference type="EC" id="2.7.1.48"/>
    </reaction>
</comment>
<comment type="catalytic activity">
    <reaction evidence="1">
        <text>cytidine + ATP = CMP + ADP + H(+)</text>
        <dbReference type="Rhea" id="RHEA:24674"/>
        <dbReference type="ChEBI" id="CHEBI:15378"/>
        <dbReference type="ChEBI" id="CHEBI:17562"/>
        <dbReference type="ChEBI" id="CHEBI:30616"/>
        <dbReference type="ChEBI" id="CHEBI:60377"/>
        <dbReference type="ChEBI" id="CHEBI:456216"/>
        <dbReference type="EC" id="2.7.1.48"/>
    </reaction>
</comment>
<comment type="pathway">
    <text evidence="1">Pyrimidine metabolism; CTP biosynthesis via salvage pathway; CTP from cytidine: step 1/3.</text>
</comment>
<comment type="pathway">
    <text evidence="1">Pyrimidine metabolism; UMP biosynthesis via salvage pathway; UMP from uridine: step 1/1.</text>
</comment>
<comment type="subcellular location">
    <subcellularLocation>
        <location evidence="1">Cytoplasm</location>
    </subcellularLocation>
</comment>
<comment type="similarity">
    <text evidence="1">Belongs to the uridine kinase family.</text>
</comment>
<name>URK_SHEB2</name>
<organism>
    <name type="scientific">Shewanella baltica (strain OS223)</name>
    <dbReference type="NCBI Taxonomy" id="407976"/>
    <lineage>
        <taxon>Bacteria</taxon>
        <taxon>Pseudomonadati</taxon>
        <taxon>Pseudomonadota</taxon>
        <taxon>Gammaproteobacteria</taxon>
        <taxon>Alteromonadales</taxon>
        <taxon>Shewanellaceae</taxon>
        <taxon>Shewanella</taxon>
    </lineage>
</organism>
<gene>
    <name evidence="1" type="primary">udk</name>
    <name type="ordered locus">Sbal223_1888</name>
</gene>
<sequence>MNSQQCVIIAIAGASASGKSLIAKTIFDELRRDLGTDQIGVINEDAYYRDQSHLSMDERVLTNYDHPKALDHQLLCTHLQLLKSGEAVDIPCYSYTEHTRIAETLTMTPKKVIILEGILLLTDPKLRALMDASVFMDTPLDICFLRRLTRDVAERGRTMESVISQYKKTVRPMFLQFIEPSKQYADIIVPRGGKNRIATDILKTRIQHLLAK</sequence>
<dbReference type="EC" id="2.7.1.48" evidence="1"/>
<dbReference type="EMBL" id="CP001252">
    <property type="protein sequence ID" value="ACK46393.1"/>
    <property type="molecule type" value="Genomic_DNA"/>
</dbReference>
<dbReference type="RefSeq" id="WP_006081926.1">
    <property type="nucleotide sequence ID" value="NC_011663.1"/>
</dbReference>
<dbReference type="SMR" id="B8E960"/>
<dbReference type="GeneID" id="11772675"/>
<dbReference type="KEGG" id="sbp:Sbal223_1888"/>
<dbReference type="HOGENOM" id="CLU_021278_1_2_6"/>
<dbReference type="UniPathway" id="UPA00574">
    <property type="reaction ID" value="UER00637"/>
</dbReference>
<dbReference type="UniPathway" id="UPA00579">
    <property type="reaction ID" value="UER00640"/>
</dbReference>
<dbReference type="Proteomes" id="UP000002507">
    <property type="component" value="Chromosome"/>
</dbReference>
<dbReference type="GO" id="GO:0005737">
    <property type="term" value="C:cytoplasm"/>
    <property type="evidence" value="ECO:0007669"/>
    <property type="project" value="UniProtKB-SubCell"/>
</dbReference>
<dbReference type="GO" id="GO:0005524">
    <property type="term" value="F:ATP binding"/>
    <property type="evidence" value="ECO:0007669"/>
    <property type="project" value="UniProtKB-UniRule"/>
</dbReference>
<dbReference type="GO" id="GO:0043771">
    <property type="term" value="F:cytidine kinase activity"/>
    <property type="evidence" value="ECO:0007669"/>
    <property type="project" value="RHEA"/>
</dbReference>
<dbReference type="GO" id="GO:0004849">
    <property type="term" value="F:uridine kinase activity"/>
    <property type="evidence" value="ECO:0007669"/>
    <property type="project" value="UniProtKB-UniRule"/>
</dbReference>
<dbReference type="GO" id="GO:0044211">
    <property type="term" value="P:CTP salvage"/>
    <property type="evidence" value="ECO:0007669"/>
    <property type="project" value="UniProtKB-UniRule"/>
</dbReference>
<dbReference type="GO" id="GO:0044206">
    <property type="term" value="P:UMP salvage"/>
    <property type="evidence" value="ECO:0007669"/>
    <property type="project" value="UniProtKB-UniRule"/>
</dbReference>
<dbReference type="CDD" id="cd02023">
    <property type="entry name" value="UMPK"/>
    <property type="match status" value="1"/>
</dbReference>
<dbReference type="Gene3D" id="3.40.50.300">
    <property type="entry name" value="P-loop containing nucleotide triphosphate hydrolases"/>
    <property type="match status" value="1"/>
</dbReference>
<dbReference type="HAMAP" id="MF_00551">
    <property type="entry name" value="Uridine_kinase"/>
    <property type="match status" value="1"/>
</dbReference>
<dbReference type="InterPro" id="IPR027417">
    <property type="entry name" value="P-loop_NTPase"/>
</dbReference>
<dbReference type="InterPro" id="IPR006083">
    <property type="entry name" value="PRK/URK"/>
</dbReference>
<dbReference type="InterPro" id="IPR026008">
    <property type="entry name" value="Uridine_kinase"/>
</dbReference>
<dbReference type="InterPro" id="IPR000764">
    <property type="entry name" value="Uridine_kinase-like"/>
</dbReference>
<dbReference type="NCBIfam" id="NF004018">
    <property type="entry name" value="PRK05480.1"/>
    <property type="match status" value="1"/>
</dbReference>
<dbReference type="NCBIfam" id="TIGR00235">
    <property type="entry name" value="udk"/>
    <property type="match status" value="1"/>
</dbReference>
<dbReference type="PANTHER" id="PTHR10285">
    <property type="entry name" value="URIDINE KINASE"/>
    <property type="match status" value="1"/>
</dbReference>
<dbReference type="Pfam" id="PF00485">
    <property type="entry name" value="PRK"/>
    <property type="match status" value="1"/>
</dbReference>
<dbReference type="PRINTS" id="PR00988">
    <property type="entry name" value="URIDINKINASE"/>
</dbReference>
<dbReference type="SUPFAM" id="SSF52540">
    <property type="entry name" value="P-loop containing nucleoside triphosphate hydrolases"/>
    <property type="match status" value="1"/>
</dbReference>
<accession>B8E960</accession>
<keyword id="KW-0067">ATP-binding</keyword>
<keyword id="KW-0963">Cytoplasm</keyword>
<keyword id="KW-0418">Kinase</keyword>
<keyword id="KW-0547">Nucleotide-binding</keyword>
<keyword id="KW-0808">Transferase</keyword>
<reference key="1">
    <citation type="submission" date="2008-12" db="EMBL/GenBank/DDBJ databases">
        <title>Complete sequence of chromosome of Shewanella baltica OS223.</title>
        <authorList>
            <consortium name="US DOE Joint Genome Institute"/>
            <person name="Lucas S."/>
            <person name="Copeland A."/>
            <person name="Lapidus A."/>
            <person name="Glavina del Rio T."/>
            <person name="Dalin E."/>
            <person name="Tice H."/>
            <person name="Bruce D."/>
            <person name="Goodwin L."/>
            <person name="Pitluck S."/>
            <person name="Chertkov O."/>
            <person name="Meincke L."/>
            <person name="Brettin T."/>
            <person name="Detter J.C."/>
            <person name="Han C."/>
            <person name="Kuske C.R."/>
            <person name="Larimer F."/>
            <person name="Land M."/>
            <person name="Hauser L."/>
            <person name="Kyrpides N."/>
            <person name="Ovchinnikova G."/>
            <person name="Brettar I."/>
            <person name="Rodrigues J."/>
            <person name="Konstantinidis K."/>
            <person name="Tiedje J."/>
        </authorList>
    </citation>
    <scope>NUCLEOTIDE SEQUENCE [LARGE SCALE GENOMIC DNA]</scope>
    <source>
        <strain>OS223</strain>
    </source>
</reference>